<accession>Q87V88</accession>
<gene>
    <name type="ordered locus">PSPTO_5051</name>
</gene>
<keyword id="KW-0378">Hydrolase</keyword>
<keyword id="KW-0460">Magnesium</keyword>
<keyword id="KW-0479">Metal-binding</keyword>
<keyword id="KW-0546">Nucleotide metabolism</keyword>
<keyword id="KW-0547">Nucleotide-binding</keyword>
<keyword id="KW-1185">Reference proteome</keyword>
<sequence>MNLTQLVLASHNGGKLKELQAMLGGSVTLRSVSEFSLVEPEETGLSFVENAILKARNASRLSGLPALADDSGLAVDFLGGAPGIYSARYADGQGDAANNAKLLEALKDVPDEQRGAQFVCVLALVRHADDPLPILCEGLWHGRILHAASGEYGFGYDPLFWVPERNCSSAELGPSEKNQLSHRARAMVLLRQRLGLQ</sequence>
<comment type="function">
    <text evidence="1">Pyrophosphatase that catalyzes the hydrolysis of nucleoside triphosphates to their monophosphate derivatives, with a high preference for the non-canonical purine nucleotides XTP (xanthosine triphosphate), dITP (deoxyinosine triphosphate) and ITP. Seems to function as a house-cleaning enzyme that removes non-canonical purine nucleotides from the nucleotide pool, thus preventing their incorporation into DNA/RNA and avoiding chromosomal lesions.</text>
</comment>
<comment type="catalytic activity">
    <reaction evidence="1">
        <text>XTP + H2O = XMP + diphosphate + H(+)</text>
        <dbReference type="Rhea" id="RHEA:28610"/>
        <dbReference type="ChEBI" id="CHEBI:15377"/>
        <dbReference type="ChEBI" id="CHEBI:15378"/>
        <dbReference type="ChEBI" id="CHEBI:33019"/>
        <dbReference type="ChEBI" id="CHEBI:57464"/>
        <dbReference type="ChEBI" id="CHEBI:61314"/>
        <dbReference type="EC" id="3.6.1.66"/>
    </reaction>
</comment>
<comment type="catalytic activity">
    <reaction evidence="1">
        <text>dITP + H2O = dIMP + diphosphate + H(+)</text>
        <dbReference type="Rhea" id="RHEA:28342"/>
        <dbReference type="ChEBI" id="CHEBI:15377"/>
        <dbReference type="ChEBI" id="CHEBI:15378"/>
        <dbReference type="ChEBI" id="CHEBI:33019"/>
        <dbReference type="ChEBI" id="CHEBI:61194"/>
        <dbReference type="ChEBI" id="CHEBI:61382"/>
        <dbReference type="EC" id="3.6.1.66"/>
    </reaction>
</comment>
<comment type="catalytic activity">
    <reaction evidence="1">
        <text>ITP + H2O = IMP + diphosphate + H(+)</text>
        <dbReference type="Rhea" id="RHEA:29399"/>
        <dbReference type="ChEBI" id="CHEBI:15377"/>
        <dbReference type="ChEBI" id="CHEBI:15378"/>
        <dbReference type="ChEBI" id="CHEBI:33019"/>
        <dbReference type="ChEBI" id="CHEBI:58053"/>
        <dbReference type="ChEBI" id="CHEBI:61402"/>
        <dbReference type="EC" id="3.6.1.66"/>
    </reaction>
</comment>
<comment type="cofactor">
    <cofactor evidence="1">
        <name>Mg(2+)</name>
        <dbReference type="ChEBI" id="CHEBI:18420"/>
    </cofactor>
    <text evidence="1">Binds 1 Mg(2+) ion per subunit.</text>
</comment>
<comment type="subunit">
    <text evidence="1">Homodimer.</text>
</comment>
<comment type="similarity">
    <text evidence="1">Belongs to the HAM1 NTPase family.</text>
</comment>
<organism>
    <name type="scientific">Pseudomonas syringae pv. tomato (strain ATCC BAA-871 / DC3000)</name>
    <dbReference type="NCBI Taxonomy" id="223283"/>
    <lineage>
        <taxon>Bacteria</taxon>
        <taxon>Pseudomonadati</taxon>
        <taxon>Pseudomonadota</taxon>
        <taxon>Gammaproteobacteria</taxon>
        <taxon>Pseudomonadales</taxon>
        <taxon>Pseudomonadaceae</taxon>
        <taxon>Pseudomonas</taxon>
    </lineage>
</organism>
<protein>
    <recommendedName>
        <fullName evidence="1">dITP/XTP pyrophosphatase</fullName>
        <ecNumber evidence="1">3.6.1.66</ecNumber>
    </recommendedName>
    <alternativeName>
        <fullName evidence="1">Non-canonical purine NTP pyrophosphatase</fullName>
    </alternativeName>
    <alternativeName>
        <fullName evidence="1">Non-standard purine NTP pyrophosphatase</fullName>
    </alternativeName>
    <alternativeName>
        <fullName evidence="1">Nucleoside-triphosphate diphosphatase</fullName>
    </alternativeName>
    <alternativeName>
        <fullName evidence="1">Nucleoside-triphosphate pyrophosphatase</fullName>
        <shortName evidence="1">NTPase</shortName>
    </alternativeName>
</protein>
<name>IXTPA_PSESM</name>
<feature type="chain" id="PRO_0000178215" description="dITP/XTP pyrophosphatase">
    <location>
        <begin position="1"/>
        <end position="197"/>
    </location>
</feature>
<feature type="active site" description="Proton acceptor" evidence="1">
    <location>
        <position position="70"/>
    </location>
</feature>
<feature type="binding site" evidence="1">
    <location>
        <begin position="10"/>
        <end position="15"/>
    </location>
    <ligand>
        <name>substrate</name>
    </ligand>
</feature>
<feature type="binding site" evidence="1">
    <location>
        <position position="41"/>
    </location>
    <ligand>
        <name>Mg(2+)</name>
        <dbReference type="ChEBI" id="CHEBI:18420"/>
    </ligand>
</feature>
<feature type="binding site" evidence="1">
    <location>
        <position position="70"/>
    </location>
    <ligand>
        <name>Mg(2+)</name>
        <dbReference type="ChEBI" id="CHEBI:18420"/>
    </ligand>
</feature>
<feature type="binding site" evidence="1">
    <location>
        <position position="71"/>
    </location>
    <ligand>
        <name>substrate</name>
    </ligand>
</feature>
<feature type="binding site" evidence="1">
    <location>
        <begin position="154"/>
        <end position="157"/>
    </location>
    <ligand>
        <name>substrate</name>
    </ligand>
</feature>
<feature type="binding site" evidence="1">
    <location>
        <position position="177"/>
    </location>
    <ligand>
        <name>substrate</name>
    </ligand>
</feature>
<feature type="binding site" evidence="1">
    <location>
        <begin position="182"/>
        <end position="183"/>
    </location>
    <ligand>
        <name>substrate</name>
    </ligand>
</feature>
<reference key="1">
    <citation type="journal article" date="2003" name="Proc. Natl. Acad. Sci. U.S.A.">
        <title>The complete genome sequence of the Arabidopsis and tomato pathogen Pseudomonas syringae pv. tomato DC3000.</title>
        <authorList>
            <person name="Buell C.R."/>
            <person name="Joardar V."/>
            <person name="Lindeberg M."/>
            <person name="Selengut J."/>
            <person name="Paulsen I.T."/>
            <person name="Gwinn M.L."/>
            <person name="Dodson R.J."/>
            <person name="DeBoy R.T."/>
            <person name="Durkin A.S."/>
            <person name="Kolonay J.F."/>
            <person name="Madupu R."/>
            <person name="Daugherty S.C."/>
            <person name="Brinkac L.M."/>
            <person name="Beanan M.J."/>
            <person name="Haft D.H."/>
            <person name="Nelson W.C."/>
            <person name="Davidsen T.M."/>
            <person name="Zafar N."/>
            <person name="Zhou L."/>
            <person name="Liu J."/>
            <person name="Yuan Q."/>
            <person name="Khouri H.M."/>
            <person name="Fedorova N.B."/>
            <person name="Tran B."/>
            <person name="Russell D."/>
            <person name="Berry K.J."/>
            <person name="Utterback T.R."/>
            <person name="Van Aken S.E."/>
            <person name="Feldblyum T.V."/>
            <person name="D'Ascenzo M."/>
            <person name="Deng W.-L."/>
            <person name="Ramos A.R."/>
            <person name="Alfano J.R."/>
            <person name="Cartinhour S."/>
            <person name="Chatterjee A.K."/>
            <person name="Delaney T.P."/>
            <person name="Lazarowitz S.G."/>
            <person name="Martin G.B."/>
            <person name="Schneider D.J."/>
            <person name="Tang X."/>
            <person name="Bender C.L."/>
            <person name="White O."/>
            <person name="Fraser C.M."/>
            <person name="Collmer A."/>
        </authorList>
    </citation>
    <scope>NUCLEOTIDE SEQUENCE [LARGE SCALE GENOMIC DNA]</scope>
    <source>
        <strain>ATCC BAA-871 / DC3000</strain>
    </source>
</reference>
<dbReference type="EC" id="3.6.1.66" evidence="1"/>
<dbReference type="EMBL" id="AE016853">
    <property type="protein sequence ID" value="AAO58479.1"/>
    <property type="molecule type" value="Genomic_DNA"/>
</dbReference>
<dbReference type="RefSeq" id="NP_794784.1">
    <property type="nucleotide sequence ID" value="NC_004578.1"/>
</dbReference>
<dbReference type="SMR" id="Q87V88"/>
<dbReference type="STRING" id="223283.PSPTO_5051"/>
<dbReference type="KEGG" id="pst:PSPTO_5051"/>
<dbReference type="PATRIC" id="fig|223283.9.peg.5171"/>
<dbReference type="eggNOG" id="COG0127">
    <property type="taxonomic scope" value="Bacteria"/>
</dbReference>
<dbReference type="HOGENOM" id="CLU_082080_0_3_6"/>
<dbReference type="OrthoDB" id="9807456at2"/>
<dbReference type="PhylomeDB" id="Q87V88"/>
<dbReference type="Proteomes" id="UP000002515">
    <property type="component" value="Chromosome"/>
</dbReference>
<dbReference type="GO" id="GO:0005829">
    <property type="term" value="C:cytosol"/>
    <property type="evidence" value="ECO:0007669"/>
    <property type="project" value="TreeGrafter"/>
</dbReference>
<dbReference type="GO" id="GO:0035870">
    <property type="term" value="F:dITP diphosphatase activity"/>
    <property type="evidence" value="ECO:0007669"/>
    <property type="project" value="RHEA"/>
</dbReference>
<dbReference type="GO" id="GO:0036220">
    <property type="term" value="F:ITP diphosphatase activity"/>
    <property type="evidence" value="ECO:0007669"/>
    <property type="project" value="UniProtKB-EC"/>
</dbReference>
<dbReference type="GO" id="GO:0046872">
    <property type="term" value="F:metal ion binding"/>
    <property type="evidence" value="ECO:0007669"/>
    <property type="project" value="UniProtKB-KW"/>
</dbReference>
<dbReference type="GO" id="GO:0000166">
    <property type="term" value="F:nucleotide binding"/>
    <property type="evidence" value="ECO:0007669"/>
    <property type="project" value="UniProtKB-KW"/>
</dbReference>
<dbReference type="GO" id="GO:0017111">
    <property type="term" value="F:ribonucleoside triphosphate phosphatase activity"/>
    <property type="evidence" value="ECO:0007669"/>
    <property type="project" value="InterPro"/>
</dbReference>
<dbReference type="GO" id="GO:0036222">
    <property type="term" value="F:XTP diphosphatase activity"/>
    <property type="evidence" value="ECO:0007669"/>
    <property type="project" value="RHEA"/>
</dbReference>
<dbReference type="GO" id="GO:0009117">
    <property type="term" value="P:nucleotide metabolic process"/>
    <property type="evidence" value="ECO:0007669"/>
    <property type="project" value="UniProtKB-KW"/>
</dbReference>
<dbReference type="GO" id="GO:0009146">
    <property type="term" value="P:purine nucleoside triphosphate catabolic process"/>
    <property type="evidence" value="ECO:0007669"/>
    <property type="project" value="UniProtKB-UniRule"/>
</dbReference>
<dbReference type="CDD" id="cd00515">
    <property type="entry name" value="HAM1"/>
    <property type="match status" value="1"/>
</dbReference>
<dbReference type="FunFam" id="3.90.950.10:FF:000001">
    <property type="entry name" value="dITP/XTP pyrophosphatase"/>
    <property type="match status" value="1"/>
</dbReference>
<dbReference type="Gene3D" id="3.90.950.10">
    <property type="match status" value="1"/>
</dbReference>
<dbReference type="HAMAP" id="MF_01405">
    <property type="entry name" value="Non_canon_purine_NTPase"/>
    <property type="match status" value="1"/>
</dbReference>
<dbReference type="InterPro" id="IPR020922">
    <property type="entry name" value="dITP/XTP_pyrophosphatase"/>
</dbReference>
<dbReference type="InterPro" id="IPR029001">
    <property type="entry name" value="ITPase-like_fam"/>
</dbReference>
<dbReference type="InterPro" id="IPR002637">
    <property type="entry name" value="RdgB/HAM1"/>
</dbReference>
<dbReference type="NCBIfam" id="TIGR00042">
    <property type="entry name" value="RdgB/HAM1 family non-canonical purine NTP pyrophosphatase"/>
    <property type="match status" value="1"/>
</dbReference>
<dbReference type="PANTHER" id="PTHR11067:SF9">
    <property type="entry name" value="INOSINE TRIPHOSPHATE PYROPHOSPHATASE"/>
    <property type="match status" value="1"/>
</dbReference>
<dbReference type="PANTHER" id="PTHR11067">
    <property type="entry name" value="INOSINE TRIPHOSPHATE PYROPHOSPHATASE/HAM1 PROTEIN"/>
    <property type="match status" value="1"/>
</dbReference>
<dbReference type="Pfam" id="PF01725">
    <property type="entry name" value="Ham1p_like"/>
    <property type="match status" value="1"/>
</dbReference>
<dbReference type="SUPFAM" id="SSF52972">
    <property type="entry name" value="ITPase-like"/>
    <property type="match status" value="1"/>
</dbReference>
<evidence type="ECO:0000255" key="1">
    <source>
        <dbReference type="HAMAP-Rule" id="MF_01405"/>
    </source>
</evidence>
<proteinExistence type="inferred from homology"/>